<dbReference type="EC" id="2.1.2.1" evidence="1"/>
<dbReference type="EMBL" id="AJ005644">
    <property type="protein sequence ID" value="CAA06649.1"/>
    <property type="molecule type" value="Genomic_DNA"/>
</dbReference>
<dbReference type="EMBL" id="AL391737">
    <property type="protein sequence ID" value="CAD24889.1"/>
    <property type="molecule type" value="Genomic_DNA"/>
</dbReference>
<dbReference type="EMBL" id="AL391737">
    <property type="protein sequence ID" value="CAD25015.1"/>
    <property type="molecule type" value="Genomic_DNA"/>
</dbReference>
<dbReference type="RefSeq" id="XP_965854.1">
    <property type="nucleotide sequence ID" value="XM_960761.1"/>
</dbReference>
<dbReference type="RefSeq" id="XP_965980.1">
    <property type="nucleotide sequence ID" value="XM_960887.1"/>
</dbReference>
<dbReference type="SMR" id="O62585"/>
<dbReference type="FunCoup" id="O62585">
    <property type="interactions" value="174"/>
</dbReference>
<dbReference type="STRING" id="284813.O62585"/>
<dbReference type="VEuPathDB" id="MicrosporidiaDB:ECU01_0190"/>
<dbReference type="VEuPathDB" id="MicrosporidiaDB:ECU01_1420"/>
<dbReference type="HOGENOM" id="CLU_022477_0_2_1"/>
<dbReference type="InParanoid" id="O62585"/>
<dbReference type="OMA" id="VTNRNAI"/>
<dbReference type="OrthoDB" id="10265628at2759"/>
<dbReference type="UniPathway" id="UPA00193"/>
<dbReference type="Proteomes" id="UP000000819">
    <property type="component" value="Chromosome I"/>
</dbReference>
<dbReference type="GO" id="GO:0005739">
    <property type="term" value="C:mitochondrion"/>
    <property type="evidence" value="ECO:0007669"/>
    <property type="project" value="TreeGrafter"/>
</dbReference>
<dbReference type="GO" id="GO:0004372">
    <property type="term" value="F:glycine hydroxymethyltransferase activity"/>
    <property type="evidence" value="ECO:0007669"/>
    <property type="project" value="UniProtKB-EC"/>
</dbReference>
<dbReference type="GO" id="GO:0030170">
    <property type="term" value="F:pyridoxal phosphate binding"/>
    <property type="evidence" value="ECO:0007669"/>
    <property type="project" value="InterPro"/>
</dbReference>
<dbReference type="GO" id="GO:0019264">
    <property type="term" value="P:glycine biosynthetic process from serine"/>
    <property type="evidence" value="ECO:0007669"/>
    <property type="project" value="InterPro"/>
</dbReference>
<dbReference type="GO" id="GO:0035999">
    <property type="term" value="P:tetrahydrofolate interconversion"/>
    <property type="evidence" value="ECO:0007669"/>
    <property type="project" value="UniProtKB-UniPathway"/>
</dbReference>
<dbReference type="CDD" id="cd00378">
    <property type="entry name" value="SHMT"/>
    <property type="match status" value="1"/>
</dbReference>
<dbReference type="Gene3D" id="3.90.1150.10">
    <property type="entry name" value="Aspartate Aminotransferase, domain 1"/>
    <property type="match status" value="1"/>
</dbReference>
<dbReference type="Gene3D" id="3.40.640.10">
    <property type="entry name" value="Type I PLP-dependent aspartate aminotransferase-like (Major domain)"/>
    <property type="match status" value="1"/>
</dbReference>
<dbReference type="HAMAP" id="MF_00051">
    <property type="entry name" value="SHMT"/>
    <property type="match status" value="1"/>
</dbReference>
<dbReference type="InterPro" id="IPR015424">
    <property type="entry name" value="PyrdxlP-dep_Trfase"/>
</dbReference>
<dbReference type="InterPro" id="IPR015421">
    <property type="entry name" value="PyrdxlP-dep_Trfase_major"/>
</dbReference>
<dbReference type="InterPro" id="IPR015422">
    <property type="entry name" value="PyrdxlP-dep_Trfase_small"/>
</dbReference>
<dbReference type="InterPro" id="IPR001085">
    <property type="entry name" value="Ser_HO-MeTrfase"/>
</dbReference>
<dbReference type="InterPro" id="IPR049943">
    <property type="entry name" value="Ser_HO-MeTrfase-like"/>
</dbReference>
<dbReference type="InterPro" id="IPR019798">
    <property type="entry name" value="Ser_HO-MeTrfase_PLP_BS"/>
</dbReference>
<dbReference type="InterPro" id="IPR039429">
    <property type="entry name" value="SHMT-like_dom"/>
</dbReference>
<dbReference type="NCBIfam" id="NF000586">
    <property type="entry name" value="PRK00011.1"/>
    <property type="match status" value="1"/>
</dbReference>
<dbReference type="PANTHER" id="PTHR11680">
    <property type="entry name" value="SERINE HYDROXYMETHYLTRANSFERASE"/>
    <property type="match status" value="1"/>
</dbReference>
<dbReference type="PANTHER" id="PTHR11680:SF35">
    <property type="entry name" value="SERINE HYDROXYMETHYLTRANSFERASE 1"/>
    <property type="match status" value="1"/>
</dbReference>
<dbReference type="Pfam" id="PF00464">
    <property type="entry name" value="SHMT"/>
    <property type="match status" value="1"/>
</dbReference>
<dbReference type="PIRSF" id="PIRSF000412">
    <property type="entry name" value="SHMT"/>
    <property type="match status" value="1"/>
</dbReference>
<dbReference type="SUPFAM" id="SSF53383">
    <property type="entry name" value="PLP-dependent transferases"/>
    <property type="match status" value="1"/>
</dbReference>
<dbReference type="PROSITE" id="PS00096">
    <property type="entry name" value="SHMT"/>
    <property type="match status" value="1"/>
</dbReference>
<protein>
    <recommendedName>
        <fullName>Serine hydroxymethyltransferase, cytosolic</fullName>
        <shortName>SHMT</shortName>
        <ecNumber evidence="1">2.1.2.1</ecNumber>
    </recommendedName>
    <alternativeName>
        <fullName>Glycine hydroxymethyltransferase</fullName>
    </alternativeName>
    <alternativeName>
        <fullName>Serine methylase</fullName>
    </alternativeName>
</protein>
<organism>
    <name type="scientific">Encephalitozoon cuniculi (strain GB-M1)</name>
    <name type="common">Microsporidian parasite</name>
    <dbReference type="NCBI Taxonomy" id="284813"/>
    <lineage>
        <taxon>Eukaryota</taxon>
        <taxon>Fungi</taxon>
        <taxon>Fungi incertae sedis</taxon>
        <taxon>Microsporidia</taxon>
        <taxon>Unikaryonidae</taxon>
        <taxon>Encephalitozoon</taxon>
    </lineage>
</organism>
<proteinExistence type="inferred from homology"/>
<accession>O62585</accession>
<accession>Q8SQH9</accession>
<sequence>MTDAREKGFWTGPLEMADPELHALICGEVERQKKTINLIASENYAHQSAMEACGSVLTNKYSEGRVGERYYGGTHWVDRIELLCQKRALELFGLDPDVWGVNVQPYSGSPANFAIYTAVVPPGGRIMGLDLPSGGHLTHGYKTKTRKISASSVYFDSRPYTVGSNGLIDYEGLEKTFTDFLPHILICGYSAYSRDIDYKRLQSIAGRNGAFLFADISHISPLVASGLMNSPFEHCDIVMTTTQKGLRGPRGALIFYRRAVTKNGETVDLDARINFAVFPMLQGGPHNHTIAGIASALLHAGTPEFAEYTRRVVENSRELCSRLQSLGLDILTGGTDNHMLLVDLRSTGVDGAAVEHMCDALGISLNRNAIVGNSSPLSPSGIRVGTYAVTARGFGPEEMREVGDIIGGVVKLCREMTGGRKMSKADLHRVTSDARVMGSEQVLVLRRRVCALAEAYPIYE</sequence>
<reference key="1">
    <citation type="journal article" date="1998" name="Microb. Comp. Genomics">
        <title>First report on the systematic sequencing of the small genome of Encephalitozoon cuniculi (Protozoa, Microspora): gene organization of a 4.3 kbp region on chromosome I.</title>
        <authorList>
            <person name="Duffieux F."/>
            <person name="Peyret P."/>
            <person name="Roe B.A."/>
            <person name="Vivares C.P."/>
        </authorList>
    </citation>
    <scope>NUCLEOTIDE SEQUENCE [GENOMIC DNA] (SHMT-1)</scope>
</reference>
<reference key="2">
    <citation type="journal article" date="2001" name="Genome Res.">
        <title>Sequence and analysis of chromosome I of the amitochondriate intracellular parasite Encephalitozoon cuniculi (Microspora).</title>
        <authorList>
            <person name="Peyret P."/>
            <person name="Katinka M.D."/>
            <person name="Duprat S."/>
            <person name="Duffieux F."/>
            <person name="Barbe V."/>
            <person name="Barbazanges M."/>
            <person name="Weissenbach J."/>
            <person name="Saurin W."/>
            <person name="Vivares C.P."/>
        </authorList>
    </citation>
    <scope>NUCLEOTIDE SEQUENCE [LARGE SCALE GENOMIC DNA] (SHMT-1 AND SHMT-2)</scope>
    <source>
        <strain>GB-M1</strain>
    </source>
</reference>
<reference key="3">
    <citation type="journal article" date="2001" name="Nature">
        <title>Genome sequence and gene compaction of the eukaryote parasite Encephalitozoon cuniculi.</title>
        <authorList>
            <person name="Katinka M.D."/>
            <person name="Duprat S."/>
            <person name="Cornillot E."/>
            <person name="Metenier G."/>
            <person name="Thomarat F."/>
            <person name="Prensier G."/>
            <person name="Barbe V."/>
            <person name="Peyretaillade E."/>
            <person name="Brottier P."/>
            <person name="Wincker P."/>
            <person name="Delbac F."/>
            <person name="El Alaoui H."/>
            <person name="Peyret P."/>
            <person name="Saurin W."/>
            <person name="Gouy M."/>
            <person name="Weissenbach J."/>
            <person name="Vivares C.P."/>
        </authorList>
    </citation>
    <scope>NUCLEOTIDE SEQUENCE [LARGE SCALE GENOMIC DNA] (SHMT-1 AND SHMT-2)</scope>
    <source>
        <strain>GB-M1</strain>
    </source>
</reference>
<gene>
    <name type="primary">SHMT-1</name>
    <name type="ordered locus">ECU01_0190</name>
</gene>
<gene>
    <name type="primary">SHMT-2</name>
    <name type="ordered locus">ECU01_1420</name>
</gene>
<comment type="function">
    <text evidence="1">Interconversion of serine and glycine.</text>
</comment>
<comment type="catalytic activity">
    <reaction evidence="1">
        <text>(6R)-5,10-methylene-5,6,7,8-tetrahydrofolate + glycine + H2O = (6S)-5,6,7,8-tetrahydrofolate + L-serine</text>
        <dbReference type="Rhea" id="RHEA:15481"/>
        <dbReference type="ChEBI" id="CHEBI:15377"/>
        <dbReference type="ChEBI" id="CHEBI:15636"/>
        <dbReference type="ChEBI" id="CHEBI:33384"/>
        <dbReference type="ChEBI" id="CHEBI:57305"/>
        <dbReference type="ChEBI" id="CHEBI:57453"/>
        <dbReference type="EC" id="2.1.2.1"/>
    </reaction>
</comment>
<comment type="cofactor">
    <cofactor evidence="1">
        <name>pyridoxal 5'-phosphate</name>
        <dbReference type="ChEBI" id="CHEBI:597326"/>
    </cofactor>
</comment>
<comment type="pathway">
    <text evidence="1">One-carbon metabolism; tetrahydrofolate interconversion.</text>
</comment>
<comment type="subunit">
    <text evidence="1">Homotetramer.</text>
</comment>
<comment type="subcellular location">
    <subcellularLocation>
        <location evidence="2">Cytoplasm</location>
    </subcellularLocation>
</comment>
<comment type="similarity">
    <text evidence="2">Belongs to the SHMT family.</text>
</comment>
<feature type="chain" id="PRO_0000113509" description="Serine hydroxymethyltransferase, cytosolic">
    <location>
        <begin position="1"/>
        <end position="460"/>
    </location>
</feature>
<feature type="modified residue" description="N6-(pyridoxal phosphate)lysine" evidence="1">
    <location>
        <position position="244"/>
    </location>
</feature>
<feature type="sequence conflict" description="In Ref. 1; CAA06649." evidence="2" ref="1">
    <original>V</original>
    <variation>A</variation>
    <location>
        <position position="98"/>
    </location>
</feature>
<feature type="sequence conflict" description="In Ref. 1; CAA06649." evidence="2" ref="1">
    <original>N</original>
    <variation>Y</variation>
    <location>
        <position position="102"/>
    </location>
</feature>
<evidence type="ECO:0000250" key="1">
    <source>
        <dbReference type="UniProtKB" id="P34896"/>
    </source>
</evidence>
<evidence type="ECO:0000305" key="2"/>
<name>GLYC_ENCCU</name>
<keyword id="KW-0963">Cytoplasm</keyword>
<keyword id="KW-0554">One-carbon metabolism</keyword>
<keyword id="KW-0663">Pyridoxal phosphate</keyword>
<keyword id="KW-1185">Reference proteome</keyword>
<keyword id="KW-0808">Transferase</keyword>